<evidence type="ECO:0000250" key="1">
    <source>
        <dbReference type="UniProtKB" id="Q99999"/>
    </source>
</evidence>
<evidence type="ECO:0000250" key="2">
    <source>
        <dbReference type="UniProtKB" id="Q9JHE4"/>
    </source>
</evidence>
<evidence type="ECO:0000255" key="3"/>
<evidence type="ECO:0000256" key="4">
    <source>
        <dbReference type="SAM" id="MobiDB-lite"/>
    </source>
</evidence>
<evidence type="ECO:0000305" key="5"/>
<reference key="1">
    <citation type="submission" date="2007-07" db="EMBL/GenBank/DDBJ databases">
        <authorList>
            <consortium name="NIH - Mammalian Gene Collection (MGC) project"/>
        </authorList>
    </citation>
    <scope>NUCLEOTIDE SEQUENCE [LARGE SCALE MRNA]</scope>
    <source>
        <strain>Hereford</strain>
        <tissue>Hypothalamus</tissue>
    </source>
</reference>
<feature type="chain" id="PRO_0000315388" description="Galactosylceramide sulfotransferase">
    <location>
        <begin position="1"/>
        <end position="423"/>
    </location>
</feature>
<feature type="topological domain" description="Cytoplasmic" evidence="3">
    <location>
        <begin position="1"/>
        <end position="14"/>
    </location>
</feature>
<feature type="transmembrane region" description="Helical; Signal-anchor for type II membrane protein" evidence="3">
    <location>
        <begin position="15"/>
        <end position="35"/>
    </location>
</feature>
<feature type="topological domain" description="Lumenal" evidence="3">
    <location>
        <begin position="36"/>
        <end position="423"/>
    </location>
</feature>
<feature type="region of interest" description="Disordered" evidence="4">
    <location>
        <begin position="48"/>
        <end position="70"/>
    </location>
</feature>
<feature type="glycosylation site" description="N-linked (GlcNAc...) asparagine" evidence="3">
    <location>
        <position position="66"/>
    </location>
</feature>
<feature type="glycosylation site" description="N-linked (GlcNAc...) asparagine" evidence="3">
    <location>
        <position position="156"/>
    </location>
</feature>
<feature type="glycosylation site" description="N-linked (GlcNAc...) asparagine" evidence="3">
    <location>
        <position position="312"/>
    </location>
</feature>
<gene>
    <name evidence="1" type="primary">GAL3ST1</name>
</gene>
<protein>
    <recommendedName>
        <fullName>Galactosylceramide sulfotransferase</fullName>
        <shortName evidence="1">GalCer sulfotransferase</shortName>
        <ecNumber evidence="1">2.8.2.11</ecNumber>
    </recommendedName>
    <alternativeName>
        <fullName evidence="1">3'-phosphoadenosine-5'-phosphosulfate:GalCer sulfotransferase</fullName>
    </alternativeName>
    <alternativeName>
        <fullName evidence="1">3'-phosphoadenylylsulfate:galactosylceramide 3'-sulfotransferase</fullName>
    </alternativeName>
    <alternativeName>
        <fullName evidence="2">Cerebroside sulfotransferase</fullName>
    </alternativeName>
</protein>
<proteinExistence type="evidence at transcript level"/>
<organism>
    <name type="scientific">Bos taurus</name>
    <name type="common">Bovine</name>
    <dbReference type="NCBI Taxonomy" id="9913"/>
    <lineage>
        <taxon>Eukaryota</taxon>
        <taxon>Metazoa</taxon>
        <taxon>Chordata</taxon>
        <taxon>Craniata</taxon>
        <taxon>Vertebrata</taxon>
        <taxon>Euteleostomi</taxon>
        <taxon>Mammalia</taxon>
        <taxon>Eutheria</taxon>
        <taxon>Laurasiatheria</taxon>
        <taxon>Artiodactyla</taxon>
        <taxon>Ruminantia</taxon>
        <taxon>Pecora</taxon>
        <taxon>Bovidae</taxon>
        <taxon>Bovinae</taxon>
        <taxon>Bos</taxon>
    </lineage>
</organism>
<comment type="function">
    <text evidence="1">Catalyzes the transfer of a sulfate group to position 3 of non-reducing beta-galactosyl residues in glycerolipids and sphingolipids, therefore participates in the biosynthesis of sulfoglycolipids. Catalyzes the synthesis of galactosylceramide sulfate (sulfatide), a major lipid component of the myelin sheath and of monogalactosylalkylacylglycerol sulfate (seminolipid), present in spermatocytes. Seems to prefer beta-glycosides at the non-reducing termini of sugar chains attached to a lipid moiety. Also acts on lactosylceramide, galactosyl 1-alkyl-2-sn-glycerol and galactosyl diacylglycerol (in vitro).</text>
</comment>
<comment type="catalytic activity">
    <reaction evidence="1">
        <text>a beta-D-galactosyl-(1&lt;-&gt;1')-N-acylsphing-4-enine + 3'-phosphoadenylyl sulfate = an N-acyl-1-beta-D-(3-O-sulfo)-galactosyl-sphing-4-enine + adenosine 3',5'-bisphosphate + H(+)</text>
        <dbReference type="Rhea" id="RHEA:20613"/>
        <dbReference type="ChEBI" id="CHEBI:15378"/>
        <dbReference type="ChEBI" id="CHEBI:18390"/>
        <dbReference type="ChEBI" id="CHEBI:58339"/>
        <dbReference type="ChEBI" id="CHEBI:58343"/>
        <dbReference type="ChEBI" id="CHEBI:75956"/>
        <dbReference type="EC" id="2.8.2.11"/>
    </reaction>
    <physiologicalReaction direction="left-to-right" evidence="1">
        <dbReference type="Rhea" id="RHEA:20614"/>
    </physiologicalReaction>
</comment>
<comment type="catalytic activity">
    <reaction evidence="1">
        <text>a 1-O-alkyl-2-acyl-3-O-(beta-D-galactosyl)-sn-glycerol + 3'-phosphoadenylyl sulfate = a 1-O-alkyl-2-acyl-3-(beta-D-3-sulfogalactosyl)-sn-glycerol + adenosine 3',5'-bisphosphate + H(+)</text>
        <dbReference type="Rhea" id="RHEA:41744"/>
        <dbReference type="ChEBI" id="CHEBI:15378"/>
        <dbReference type="ChEBI" id="CHEBI:58339"/>
        <dbReference type="ChEBI" id="CHEBI:58343"/>
        <dbReference type="ChEBI" id="CHEBI:78428"/>
        <dbReference type="ChEBI" id="CHEBI:78429"/>
        <dbReference type="EC" id="2.8.2.11"/>
    </reaction>
    <physiologicalReaction direction="left-to-right" evidence="1">
        <dbReference type="Rhea" id="RHEA:41745"/>
    </physiologicalReaction>
</comment>
<comment type="catalytic activity">
    <reaction evidence="1">
        <text>a beta-D-Gal-(1&lt;-&gt;1')-ceramide + 3'-phosphoadenylyl sulfate = 1-(3-O-sulfo-beta-D-galactosyl)-ceramide + adenosine 3',5'-bisphosphate + H(+)</text>
        <dbReference type="Rhea" id="RHEA:43304"/>
        <dbReference type="ChEBI" id="CHEBI:15378"/>
        <dbReference type="ChEBI" id="CHEBI:58339"/>
        <dbReference type="ChEBI" id="CHEBI:58343"/>
        <dbReference type="ChEBI" id="CHEBI:82953"/>
        <dbReference type="ChEBI" id="CHEBI:143593"/>
    </reaction>
    <physiologicalReaction direction="left-to-right" evidence="1">
        <dbReference type="Rhea" id="RHEA:43305"/>
    </physiologicalReaction>
</comment>
<comment type="catalytic activity">
    <reaction evidence="1">
        <text>a 1,2-diacyl-3-O-(beta-D-galactosyl)-sn-glycerol + 3'-phosphoadenylyl sulfate = 1,2-diacyl-3-(3-O-sulfo-beta-D-galactosyl)-sn-glycerol + adenosine 3',5'-bisphosphate + H(+)</text>
        <dbReference type="Rhea" id="RHEA:41748"/>
        <dbReference type="ChEBI" id="CHEBI:15378"/>
        <dbReference type="ChEBI" id="CHEBI:17615"/>
        <dbReference type="ChEBI" id="CHEBI:58339"/>
        <dbReference type="ChEBI" id="CHEBI:58343"/>
        <dbReference type="ChEBI" id="CHEBI:157618"/>
    </reaction>
    <physiologicalReaction direction="left-to-right" evidence="1">
        <dbReference type="Rhea" id="RHEA:41749"/>
    </physiologicalReaction>
</comment>
<comment type="catalytic activity">
    <reaction evidence="1">
        <text>a beta-D-Gal-(1-&gt;4)-beta-D-Glc-(1&lt;-&gt;1)-Cer(d18:1(4E)) + 3'-phosphoadenylyl sulfate = beta-D-3-sulfogalactosyl-(1-&gt;4)-beta-D-glucosyl-(1&lt;-&gt;1')-N-acylsphing-4-enine + adenosine 3',5'-bisphosphate + H(+)</text>
        <dbReference type="Rhea" id="RHEA:41736"/>
        <dbReference type="ChEBI" id="CHEBI:15378"/>
        <dbReference type="ChEBI" id="CHEBI:17950"/>
        <dbReference type="ChEBI" id="CHEBI:58339"/>
        <dbReference type="ChEBI" id="CHEBI:58343"/>
        <dbReference type="ChEBI" id="CHEBI:78426"/>
    </reaction>
    <physiologicalReaction direction="left-to-right" evidence="1">
        <dbReference type="Rhea" id="RHEA:41737"/>
    </physiologicalReaction>
</comment>
<comment type="pathway">
    <text evidence="1">Lipid metabolism; sphingolipid metabolism.</text>
</comment>
<comment type="subcellular location">
    <subcellularLocation>
        <location evidence="5">Golgi apparatus membrane</location>
        <topology evidence="5">Single-pass type II membrane protein</topology>
    </subcellularLocation>
</comment>
<comment type="similarity">
    <text evidence="5">Belongs to the galactose-3-O-sulfotransferase family.</text>
</comment>
<accession>A6QNK1</accession>
<dbReference type="EC" id="2.8.2.11" evidence="1"/>
<dbReference type="EMBL" id="BC148870">
    <property type="protein sequence ID" value="AAI48871.1"/>
    <property type="molecule type" value="mRNA"/>
</dbReference>
<dbReference type="RefSeq" id="NP_001095442.1">
    <property type="nucleotide sequence ID" value="NM_001101972.1"/>
</dbReference>
<dbReference type="FunCoup" id="A6QNK1">
    <property type="interactions" value="5"/>
</dbReference>
<dbReference type="STRING" id="9913.ENSBTAP00000063705"/>
<dbReference type="GlyCosmos" id="A6QNK1">
    <property type="glycosylation" value="3 sites, No reported glycans"/>
</dbReference>
<dbReference type="GlyGen" id="A6QNK1">
    <property type="glycosylation" value="3 sites"/>
</dbReference>
<dbReference type="PaxDb" id="9913-ENSBTAP00000048547"/>
<dbReference type="GeneID" id="513295"/>
<dbReference type="KEGG" id="bta:513295"/>
<dbReference type="CTD" id="9514"/>
<dbReference type="eggNOG" id="ENOG502QTXT">
    <property type="taxonomic scope" value="Eukaryota"/>
</dbReference>
<dbReference type="InParanoid" id="A6QNK1"/>
<dbReference type="OrthoDB" id="514299at2759"/>
<dbReference type="UniPathway" id="UPA00222"/>
<dbReference type="Proteomes" id="UP000009136">
    <property type="component" value="Unplaced"/>
</dbReference>
<dbReference type="GO" id="GO:0000139">
    <property type="term" value="C:Golgi membrane"/>
    <property type="evidence" value="ECO:0007669"/>
    <property type="project" value="UniProtKB-SubCell"/>
</dbReference>
<dbReference type="GO" id="GO:0001733">
    <property type="term" value="F:galactosylceramide sulfotransferase activity"/>
    <property type="evidence" value="ECO:0000250"/>
    <property type="project" value="UniProtKB"/>
</dbReference>
<dbReference type="GO" id="GO:0006682">
    <property type="term" value="P:galactosylceramide biosynthetic process"/>
    <property type="evidence" value="ECO:0000318"/>
    <property type="project" value="GO_Central"/>
</dbReference>
<dbReference type="GO" id="GO:0006681">
    <property type="term" value="P:galactosylceramide metabolic process"/>
    <property type="evidence" value="ECO:0000250"/>
    <property type="project" value="UniProtKB"/>
</dbReference>
<dbReference type="GO" id="GO:0046486">
    <property type="term" value="P:glycerolipid metabolic process"/>
    <property type="evidence" value="ECO:0000250"/>
    <property type="project" value="UniProtKB"/>
</dbReference>
<dbReference type="GO" id="GO:0042552">
    <property type="term" value="P:myelination"/>
    <property type="evidence" value="ECO:0000318"/>
    <property type="project" value="GO_Central"/>
</dbReference>
<dbReference type="GO" id="GO:0006665">
    <property type="term" value="P:sphingolipid metabolic process"/>
    <property type="evidence" value="ECO:0000250"/>
    <property type="project" value="UniProtKB"/>
</dbReference>
<dbReference type="FunFam" id="3.40.50.300:FF:000807">
    <property type="entry name" value="galactosylceramide sulfotransferase isoform X1"/>
    <property type="match status" value="1"/>
</dbReference>
<dbReference type="Gene3D" id="3.40.50.300">
    <property type="entry name" value="P-loop containing nucleotide triphosphate hydrolases"/>
    <property type="match status" value="1"/>
</dbReference>
<dbReference type="InterPro" id="IPR009729">
    <property type="entry name" value="Gal-3-0_sulfotransfrase"/>
</dbReference>
<dbReference type="InterPro" id="IPR027417">
    <property type="entry name" value="P-loop_NTPase"/>
</dbReference>
<dbReference type="PANTHER" id="PTHR14647">
    <property type="entry name" value="GALACTOSE-3-O-SULFOTRANSFERASE"/>
    <property type="match status" value="1"/>
</dbReference>
<dbReference type="PANTHER" id="PTHR14647:SF56">
    <property type="entry name" value="GALACTOSYLCERAMIDE SULFOTRANSFERASE"/>
    <property type="match status" value="1"/>
</dbReference>
<dbReference type="Pfam" id="PF06990">
    <property type="entry name" value="Gal-3-0_sulfotr"/>
    <property type="match status" value="1"/>
</dbReference>
<dbReference type="SUPFAM" id="SSF52540">
    <property type="entry name" value="P-loop containing nucleoside triphosphate hydrolases"/>
    <property type="match status" value="1"/>
</dbReference>
<keyword id="KW-0325">Glycoprotein</keyword>
<keyword id="KW-0333">Golgi apparatus</keyword>
<keyword id="KW-0443">Lipid metabolism</keyword>
<keyword id="KW-0472">Membrane</keyword>
<keyword id="KW-1185">Reference proteome</keyword>
<keyword id="KW-0735">Signal-anchor</keyword>
<keyword id="KW-0746">Sphingolipid metabolism</keyword>
<keyword id="KW-0808">Transferase</keyword>
<keyword id="KW-0812">Transmembrane</keyword>
<keyword id="KW-1133">Transmembrane helix</keyword>
<name>G3ST1_BOVIN</name>
<sequence>MPLPQKKRWESMAKGLVLGALFTSFLLLLYSYAVPPLYTGLASTTPEGAAPCSPAPREPEAPTSANGSAGGCQPRRDIVFMKTHKTASSTLLNILFRFGQKHGLKFAFPNGRNDFDYPAFFARSLVQDYRPGACFNIICNHMRFHYDEVRGLVAPNATFITVLRDPARLFESSFHYFGSVVPFTWKLSGRDKLAEFLQDPDRYYDARGYNAHYLRNLLFFDLGYDSDLDPSSPQVQEHILEVERHFHLVLLQEYFDESLVLLKDLLCWELEDVLYFKLNARRASAVPRLSGELYRRATAWNVLDARLYRHFNASFWRKVEAFGRERMAREVAALRRANERMRRICIDGGRAVDAAAIEDSAMQPWQPLGAKSILGYNLKKSIGQRHAQLCRRMLTPEIQYLMDLGANLWITKLWKFIRDFLRW</sequence>